<gene>
    <name evidence="22" type="primary">Mapk1</name>
    <name type="synonym">Erk2</name>
    <name type="synonym">Mapk</name>
    <name type="synonym">Prkm1</name>
</gene>
<comment type="function">
    <text evidence="3 4 7 8 9 15 18 19 20">Serine/threonine kinase which acts as an essential component of the MAP kinase signal transduction pathway. MAPK1/ERK2 and MAPK3/ERK1 are the 2 MAPKs which play an important role in the MAPK/ERK cascade. They participate also in a signaling cascade initiated by activated KIT and KITLG/SCF. Depending on the cellular context, the MAPK/ERK cascade mediates diverse biological functions such as cell growth, adhesion, survival and differentiation through the regulation of transcription, translation, cytoskeletal rearrangements. The MAPK/ERK cascade also plays a role in initiation and regulation of meiosis, mitosis, and postmitotic functions in differentiated cells by phosphorylating a number of transcription factors. About 160 substrates have already been discovered for ERKs. Many of these substrates are localized in the nucleus, and seem to participate in the regulation of transcription upon stimulation. However, other substrates are found in the cytosol as well as in other cellular organelles, and those are responsible for processes such as translation, mitosis and apoptosis. Moreover, the MAPK/ERK cascade is also involved in the regulation of the endosomal dynamics, including lysosome processing and endosome cycling through the perinuclear recycling compartment (PNRC); as well as in the fragmentation of the Golgi apparatus during mitosis. The substrates include transcription factors (such as ATF2, BCL6, ELK1, ERF, FOS, HSF4 or SPZ1), cytoskeletal elements (such as CANX, CTTN, GJA1, MAP2, MAPT, PXN, SORBS3 or STMN1), regulators of apoptosis (such as BAD, BTG2, CASP9, DAPK1, IER3, MCL1 or PPARG), regulators of translation (such as EIF4EBP1 and FXR1) and a variety of other signaling-related molecules (like ARHGEF2, DCC, FRS2 or GRB10). Protein kinases (such as RAF1, RPS6KA1/RSK1, RPS6KA3/RSK2, RPS6KA2/RSK3, RPS6KA6/RSK4, SYK, MKNK1/MNK1, MKNK2/MNK2, RPS6KA5/MSK1, RPS6KA4/MSK2, MAPKAPK3 or MAPKAPK5) and phosphatases (such as DUSP1, DUSP4, DUSP6 or DUSP16) are other substrates which enable the propagation the MAPK/ERK signal to additional cytosolic and nuclear targets, thereby extending the specificity of the cascade. Mediates phosphorylation of TPR in response to EGF stimulation. May play a role in the spindle assembly checkpoint. Phosphorylates PML and promotes its interaction with PIN1, leading to PML degradation. Phosphorylates CDK2AP2 (By similarity). Phosphorylates phosphoglycerate kinase PGK1 under hypoxic conditions to promote its targeting to the mitochondrion and suppress the formation of acetyl-coenzyme A from pyruvate (By similarity).</text>
</comment>
<comment type="function">
    <text evidence="3">Acts as a transcriptional repressor. Binds to a [GC]AAA[GC] consensus sequence. Repress the expression of interferon gamma-induced genes. Seems to bind to the promoter of CCL5, DMP1, IFIH1, IFITM1, IRF7, IRF9, LAMP3, OAS1, OAS2, OAS3 and STAT1. Transcriptional activity is independent of kinase activity.</text>
</comment>
<comment type="catalytic activity">
    <reaction evidence="3">
        <text>L-seryl-[protein] + ATP = O-phospho-L-seryl-[protein] + ADP + H(+)</text>
        <dbReference type="Rhea" id="RHEA:17989"/>
        <dbReference type="Rhea" id="RHEA-COMP:9863"/>
        <dbReference type="Rhea" id="RHEA-COMP:11604"/>
        <dbReference type="ChEBI" id="CHEBI:15378"/>
        <dbReference type="ChEBI" id="CHEBI:29999"/>
        <dbReference type="ChEBI" id="CHEBI:30616"/>
        <dbReference type="ChEBI" id="CHEBI:83421"/>
        <dbReference type="ChEBI" id="CHEBI:456216"/>
        <dbReference type="EC" id="2.7.11.24"/>
    </reaction>
</comment>
<comment type="catalytic activity">
    <reaction>
        <text>L-threonyl-[protein] + ATP = O-phospho-L-threonyl-[protein] + ADP + H(+)</text>
        <dbReference type="Rhea" id="RHEA:46608"/>
        <dbReference type="Rhea" id="RHEA-COMP:11060"/>
        <dbReference type="Rhea" id="RHEA-COMP:11605"/>
        <dbReference type="ChEBI" id="CHEBI:15378"/>
        <dbReference type="ChEBI" id="CHEBI:30013"/>
        <dbReference type="ChEBI" id="CHEBI:30616"/>
        <dbReference type="ChEBI" id="CHEBI:61977"/>
        <dbReference type="ChEBI" id="CHEBI:456216"/>
        <dbReference type="EC" id="2.7.11.24"/>
    </reaction>
</comment>
<comment type="cofactor">
    <cofactor evidence="1">
        <name>Mg(2+)</name>
        <dbReference type="ChEBI" id="CHEBI:18420"/>
    </cofactor>
</comment>
<comment type="activity regulation">
    <text evidence="17">Phosphorylated by MAP2K1/MEK1 and MAP2K2/MEK2 on Thr-183 and Tyr-185 in response to external stimuli like insulin or NGF. Both phosphorylations are required for activity. This phosphorylation causes dramatic conformational changes, which enable full activation and interaction of MAPK1/ERK2 with its substrates. Phosphorylation on Ser-27 by SGK1 results in its activation by enhancing its interaction with MAP2K1/MEK1 and MAP2K2/MEK2. Dephosphorylated and inactivated by DUSP1, DUSP3, DUSP6 and DUSP9. Inactivated by pyrimidylpyrrole inhibitors.</text>
</comment>
<comment type="subunit">
    <text evidence="3 4 8 10 11 12 16">Binds both upstream activators and downstream substrates in multimolecular complexes. This interaction inhibits its tyrosine-kinase activity. Interacts with ADAM15, ARHGEF2, ARRB2, DAPK1 (via death domain), HSF4, IER3, IPO7, NISCH, SGK1, and isoform 1 of NEK2. Interacts (via phosphorylated form) with TPR (via C-terminal region and phosphorylated form); the interaction requires dimerization of MAPK1/ERK2 and increases following EGF stimulation (By similarity). Interacts with MAP2K1 (By similarity). Interacts with DUSP6 (By similarity). Interacts (phosphorylated form) with CAV2 ('Tyr-19'-phosphorylated form); the interaction, promoted by insulin, leads to nuclear location and MAPK1 activation. Interacts with DCC (By similarity). Interacts with MORG1 (PubMed:15118098). Interacts with PEA15 (PubMed:16162500). Interacts with MKNK2. MKNK2 isoform 1 binding prevents from dephosphorylation and inactivation (PubMed:11702783). The phosphorylated form interacts with PML. Interacts with STYX. Interacts with CDK2AP2. Interacts with CAVIN4 (By similarity). Interacts with DUSP7; the interaction enhances DUSP7 phosphatase activity (PubMed:27783954). Interacts with GIT1; this interaction is necessary for MAPK1 localization to focal adhesions (PubMed:15923189). Interacts with ZNF263 (By similarity). Interacts with phosphoglycerate kinase PGK1; the interaction is direct, occurs under hypoxic conditions, and promotes interaction between PGK1 and PIN1 (By similarity).</text>
</comment>
<comment type="interaction">
    <interactant intactId="EBI-397697">
        <id>P63085</id>
    </interactant>
    <interactant intactId="EBI-300895">
        <id>Q62108</id>
        <label>Dlg4</label>
    </interactant>
    <organismsDiffer>false</organismsDiffer>
    <experiments>4</experiments>
</comment>
<comment type="interaction">
    <interactant intactId="EBI-397697">
        <id>P63085</id>
    </interactant>
    <interactant intactId="EBI-7812384">
        <id>Q9DBB1</id>
        <label>Dusp6</label>
    </interactant>
    <organismsDiffer>false</organismsDiffer>
    <experiments>2</experiments>
</comment>
<comment type="interaction">
    <interactant intactId="EBI-397697">
        <id>P63085</id>
    </interactant>
    <interactant intactId="EBI-646850">
        <id>Q03172</id>
        <label>Hivep1</label>
    </interactant>
    <organismsDiffer>false</organismsDiffer>
    <experiments>4</experiments>
</comment>
<comment type="interaction">
    <interactant intactId="EBI-397697">
        <id>P63085</id>
    </interactant>
    <interactant intactId="EBI-397697">
        <id>P63085</id>
        <label>Mapk1</label>
    </interactant>
    <organismsDiffer>false</organismsDiffer>
    <experiments>5</experiments>
</comment>
<comment type="interaction">
    <interactant intactId="EBI-397697">
        <id>P63085</id>
    </interactant>
    <interactant intactId="EBI-646209">
        <id>Q8CDB0</id>
        <label>Mknk2</label>
    </interactant>
    <organismsDiffer>false</organismsDiffer>
    <experiments>23</experiments>
</comment>
<comment type="interaction">
    <interactant intactId="EBI-397697">
        <id>P63085</id>
    </interactant>
    <interactant intactId="EBI-646962">
        <id>Q8R332-1</id>
        <label>Nup58</label>
    </interactant>
    <organismsDiffer>false</organismsDiffer>
    <experiments>3</experiments>
</comment>
<comment type="interaction">
    <interactant intactId="EBI-397697">
        <id>P63085</id>
    </interactant>
    <interactant intactId="EBI-6954051">
        <id>Q62132</id>
        <label>Ptprr</label>
    </interactant>
    <organismsDiffer>false</organismsDiffer>
    <experiments>5</experiments>
</comment>
<comment type="interaction">
    <interactant intactId="EBI-397697">
        <id>P63085</id>
    </interactant>
    <interactant intactId="EBI-412887">
        <id>Q9Z2B9</id>
        <label>Rps6ka4</label>
    </interactant>
    <organismsDiffer>false</organismsDiffer>
    <experiments>3</experiments>
</comment>
<comment type="interaction">
    <interactant intactId="EBI-397697">
        <id>P63085</id>
    </interactant>
    <interactant intactId="EBI-373586">
        <id>P49841</id>
        <label>GSK3B</label>
    </interactant>
    <organismsDiffer>true</organismsDiffer>
    <experiments>2</experiments>
</comment>
<comment type="interaction">
    <interactant intactId="EBI-397697">
        <id>P63085</id>
    </interactant>
    <interactant intactId="EBI-1045459">
        <id>O95863</id>
        <label>SNAI1</label>
    </interactant>
    <organismsDiffer>true</organismsDiffer>
    <experiments>3</experiments>
</comment>
<comment type="interaction">
    <interactant intactId="EBI-397697">
        <id>P63085</id>
    </interactant>
    <interactant intactId="EBI-16463657">
        <id>A0A0F6AZL3</id>
        <label>sseI</label>
    </interactant>
    <organismsDiffer>true</organismsDiffer>
    <experiments>3</experiments>
</comment>
<comment type="interaction">
    <interactant intactId="EBI-397697">
        <id>P63085</id>
    </interactant>
    <interactant intactId="EBI-11692733">
        <id>G3G926</id>
        <label>US2</label>
    </interactant>
    <organismsDiffer>true</organismsDiffer>
    <experiments>8</experiments>
</comment>
<comment type="subcellular location">
    <subcellularLocation>
        <location evidence="1">Cytoplasm</location>
        <location evidence="1">Cytoskeleton</location>
        <location evidence="1">Spindle</location>
    </subcellularLocation>
    <subcellularLocation>
        <location>Nucleus</location>
    </subcellularLocation>
    <subcellularLocation>
        <location evidence="1">Cytoplasm</location>
        <location evidence="1">Cytoskeleton</location>
        <location evidence="1">Microtubule organizing center</location>
        <location evidence="1">Centrosome</location>
    </subcellularLocation>
    <subcellularLocation>
        <location>Cytoplasm</location>
    </subcellularLocation>
    <subcellularLocation>
        <location evidence="4">Membrane</location>
        <location evidence="4">Caveola</location>
    </subcellularLocation>
    <subcellularLocation>
        <location evidence="11">Cell junction</location>
        <location evidence="11">Focal adhesion</location>
    </subcellularLocation>
    <text evidence="1 11">Associated with the spindle during prometaphase and metaphase (By similarity). PEA15-binding and phosphorylated DAPK1 promote its cytoplasmic retention. Phosphorylation at Ser-244 and Ser-246 as well as autophosphorylation at Thr-188 promote nuclear localization (By similarity). Localization to focal adhesions is stimulated by EGF (PubMed:15923189).</text>
</comment>
<comment type="tissue specificity">
    <text>Widely expressed.</text>
</comment>
<comment type="domain">
    <text>The TXY motif contains the threonine and tyrosine residues whose phosphorylation activates the MAP kinases.</text>
</comment>
<comment type="PTM">
    <text evidence="1 3 17">Dually phosphorylated on Thr-183 and Tyr-185, which activates the enzyme. Ligand-activated ALK induces tyrosine phosphorylation (By similarity). Dephosphorylated by PTPRJ at Tyr-185 (By similarity). Phosphorylated upon FLT3 and KIT signaling (By similarity). Dephosphorylated by DUSP1 and DUSP2 at Thr-183 and Tyr-185 (By similarity) (PubMed:8221888).</text>
</comment>
<comment type="PTM">
    <text evidence="14">ISGylated.</text>
</comment>
<comment type="PTM">
    <text evidence="2">Ubiquitinated by TRIM15 via 'Lys-63'-linked ubiquitination; leading to activation. Deubiquitinated by CYLD.</text>
</comment>
<comment type="similarity">
    <text evidence="21">Belongs to the protein kinase superfamily. CMGC Ser/Thr protein kinase family. MAP kinase subfamily.</text>
</comment>
<keyword id="KW-0007">Acetylation</keyword>
<keyword id="KW-0053">Apoptosis</keyword>
<keyword id="KW-0067">ATP-binding</keyword>
<keyword id="KW-0131">Cell cycle</keyword>
<keyword id="KW-0965">Cell junction</keyword>
<keyword id="KW-0963">Cytoplasm</keyword>
<keyword id="KW-0206">Cytoskeleton</keyword>
<keyword id="KW-0903">Direct protein sequencing</keyword>
<keyword id="KW-0418">Kinase</keyword>
<keyword id="KW-0472">Membrane</keyword>
<keyword id="KW-0547">Nucleotide-binding</keyword>
<keyword id="KW-0539">Nucleus</keyword>
<keyword id="KW-0597">Phosphoprotein</keyword>
<keyword id="KW-1185">Reference proteome</keyword>
<keyword id="KW-0723">Serine/threonine-protein kinase</keyword>
<keyword id="KW-0808">Transferase</keyword>
<keyword id="KW-0832">Ubl conjugation</keyword>
<protein>
    <recommendedName>
        <fullName evidence="21">Mitogen-activated protein kinase 1</fullName>
        <shortName>MAP kinase 1</shortName>
        <shortName>MAPK 1</shortName>
        <ecNumber evidence="3">2.7.11.24</ecNumber>
    </recommendedName>
    <alternativeName>
        <fullName>ERT1</fullName>
    </alternativeName>
    <alternativeName>
        <fullName>Extracellular signal-regulated kinase 2</fullName>
        <shortName>ERK-2</shortName>
    </alternativeName>
    <alternativeName>
        <fullName>MAP kinase isoform p42</fullName>
        <shortName>p42-MAPK</shortName>
    </alternativeName>
    <alternativeName>
        <fullName>Mitogen-activated protein kinase 2</fullName>
        <shortName>MAP kinase 2</shortName>
        <shortName>MAPK 2</shortName>
    </alternativeName>
</protein>
<organism>
    <name type="scientific">Mus musculus</name>
    <name type="common">Mouse</name>
    <dbReference type="NCBI Taxonomy" id="10090"/>
    <lineage>
        <taxon>Eukaryota</taxon>
        <taxon>Metazoa</taxon>
        <taxon>Chordata</taxon>
        <taxon>Craniata</taxon>
        <taxon>Vertebrata</taxon>
        <taxon>Euteleostomi</taxon>
        <taxon>Mammalia</taxon>
        <taxon>Eutheria</taxon>
        <taxon>Euarchontoglires</taxon>
        <taxon>Glires</taxon>
        <taxon>Rodentia</taxon>
        <taxon>Myomorpha</taxon>
        <taxon>Muroidea</taxon>
        <taxon>Muridae</taxon>
        <taxon>Murinae</taxon>
        <taxon>Mus</taxon>
        <taxon>Mus</taxon>
    </lineage>
</organism>
<accession>P63085</accession>
<accession>P27703</accession>
<accession>Q3V1U6</accession>
<reference key="1">
    <citation type="journal article" date="1991" name="Nucleic Acids Res.">
        <title>Sequence of pp42/MAP kinase, a serine/threonine kinase regulated by tyrosine phosphorylation.</title>
        <authorList>
            <person name="Her J.-H."/>
            <person name="Wu J.-S."/>
            <person name="Rall T.B."/>
            <person name="Sturgill T.W."/>
            <person name="Weber M.J."/>
        </authorList>
    </citation>
    <scope>NUCLEOTIDE SEQUENCE [MRNA]</scope>
    <source>
        <strain>SWR/J</strain>
        <tissue>Fibroblast</tissue>
    </source>
</reference>
<reference key="2">
    <citation type="journal article" date="2005" name="Science">
        <title>The transcriptional landscape of the mammalian genome.</title>
        <authorList>
            <person name="Carninci P."/>
            <person name="Kasukawa T."/>
            <person name="Katayama S."/>
            <person name="Gough J."/>
            <person name="Frith M.C."/>
            <person name="Maeda N."/>
            <person name="Oyama R."/>
            <person name="Ravasi T."/>
            <person name="Lenhard B."/>
            <person name="Wells C."/>
            <person name="Kodzius R."/>
            <person name="Shimokawa K."/>
            <person name="Bajic V.B."/>
            <person name="Brenner S.E."/>
            <person name="Batalov S."/>
            <person name="Forrest A.R."/>
            <person name="Zavolan M."/>
            <person name="Davis M.J."/>
            <person name="Wilming L.G."/>
            <person name="Aidinis V."/>
            <person name="Allen J.E."/>
            <person name="Ambesi-Impiombato A."/>
            <person name="Apweiler R."/>
            <person name="Aturaliya R.N."/>
            <person name="Bailey T.L."/>
            <person name="Bansal M."/>
            <person name="Baxter L."/>
            <person name="Beisel K.W."/>
            <person name="Bersano T."/>
            <person name="Bono H."/>
            <person name="Chalk A.M."/>
            <person name="Chiu K.P."/>
            <person name="Choudhary V."/>
            <person name="Christoffels A."/>
            <person name="Clutterbuck D.R."/>
            <person name="Crowe M.L."/>
            <person name="Dalla E."/>
            <person name="Dalrymple B.P."/>
            <person name="de Bono B."/>
            <person name="Della Gatta G."/>
            <person name="di Bernardo D."/>
            <person name="Down T."/>
            <person name="Engstrom P."/>
            <person name="Fagiolini M."/>
            <person name="Faulkner G."/>
            <person name="Fletcher C.F."/>
            <person name="Fukushima T."/>
            <person name="Furuno M."/>
            <person name="Futaki S."/>
            <person name="Gariboldi M."/>
            <person name="Georgii-Hemming P."/>
            <person name="Gingeras T.R."/>
            <person name="Gojobori T."/>
            <person name="Green R.E."/>
            <person name="Gustincich S."/>
            <person name="Harbers M."/>
            <person name="Hayashi Y."/>
            <person name="Hensch T.K."/>
            <person name="Hirokawa N."/>
            <person name="Hill D."/>
            <person name="Huminiecki L."/>
            <person name="Iacono M."/>
            <person name="Ikeo K."/>
            <person name="Iwama A."/>
            <person name="Ishikawa T."/>
            <person name="Jakt M."/>
            <person name="Kanapin A."/>
            <person name="Katoh M."/>
            <person name="Kawasawa Y."/>
            <person name="Kelso J."/>
            <person name="Kitamura H."/>
            <person name="Kitano H."/>
            <person name="Kollias G."/>
            <person name="Krishnan S.P."/>
            <person name="Kruger A."/>
            <person name="Kummerfeld S.K."/>
            <person name="Kurochkin I.V."/>
            <person name="Lareau L.F."/>
            <person name="Lazarevic D."/>
            <person name="Lipovich L."/>
            <person name="Liu J."/>
            <person name="Liuni S."/>
            <person name="McWilliam S."/>
            <person name="Madan Babu M."/>
            <person name="Madera M."/>
            <person name="Marchionni L."/>
            <person name="Matsuda H."/>
            <person name="Matsuzawa S."/>
            <person name="Miki H."/>
            <person name="Mignone F."/>
            <person name="Miyake S."/>
            <person name="Morris K."/>
            <person name="Mottagui-Tabar S."/>
            <person name="Mulder N."/>
            <person name="Nakano N."/>
            <person name="Nakauchi H."/>
            <person name="Ng P."/>
            <person name="Nilsson R."/>
            <person name="Nishiguchi S."/>
            <person name="Nishikawa S."/>
            <person name="Nori F."/>
            <person name="Ohara O."/>
            <person name="Okazaki Y."/>
            <person name="Orlando V."/>
            <person name="Pang K.C."/>
            <person name="Pavan W.J."/>
            <person name="Pavesi G."/>
            <person name="Pesole G."/>
            <person name="Petrovsky N."/>
            <person name="Piazza S."/>
            <person name="Reed J."/>
            <person name="Reid J.F."/>
            <person name="Ring B.Z."/>
            <person name="Ringwald M."/>
            <person name="Rost B."/>
            <person name="Ruan Y."/>
            <person name="Salzberg S.L."/>
            <person name="Sandelin A."/>
            <person name="Schneider C."/>
            <person name="Schoenbach C."/>
            <person name="Sekiguchi K."/>
            <person name="Semple C.A."/>
            <person name="Seno S."/>
            <person name="Sessa L."/>
            <person name="Sheng Y."/>
            <person name="Shibata Y."/>
            <person name="Shimada H."/>
            <person name="Shimada K."/>
            <person name="Silva D."/>
            <person name="Sinclair B."/>
            <person name="Sperling S."/>
            <person name="Stupka E."/>
            <person name="Sugiura K."/>
            <person name="Sultana R."/>
            <person name="Takenaka Y."/>
            <person name="Taki K."/>
            <person name="Tammoja K."/>
            <person name="Tan S.L."/>
            <person name="Tang S."/>
            <person name="Taylor M.S."/>
            <person name="Tegner J."/>
            <person name="Teichmann S.A."/>
            <person name="Ueda H.R."/>
            <person name="van Nimwegen E."/>
            <person name="Verardo R."/>
            <person name="Wei C.L."/>
            <person name="Yagi K."/>
            <person name="Yamanishi H."/>
            <person name="Zabarovsky E."/>
            <person name="Zhu S."/>
            <person name="Zimmer A."/>
            <person name="Hide W."/>
            <person name="Bult C."/>
            <person name="Grimmond S.M."/>
            <person name="Teasdale R.D."/>
            <person name="Liu E.T."/>
            <person name="Brusic V."/>
            <person name="Quackenbush J."/>
            <person name="Wahlestedt C."/>
            <person name="Mattick J.S."/>
            <person name="Hume D.A."/>
            <person name="Kai C."/>
            <person name="Sasaki D."/>
            <person name="Tomaru Y."/>
            <person name="Fukuda S."/>
            <person name="Kanamori-Katayama M."/>
            <person name="Suzuki M."/>
            <person name="Aoki J."/>
            <person name="Arakawa T."/>
            <person name="Iida J."/>
            <person name="Imamura K."/>
            <person name="Itoh M."/>
            <person name="Kato T."/>
            <person name="Kawaji H."/>
            <person name="Kawagashira N."/>
            <person name="Kawashima T."/>
            <person name="Kojima M."/>
            <person name="Kondo S."/>
            <person name="Konno H."/>
            <person name="Nakano K."/>
            <person name="Ninomiya N."/>
            <person name="Nishio T."/>
            <person name="Okada M."/>
            <person name="Plessy C."/>
            <person name="Shibata K."/>
            <person name="Shiraki T."/>
            <person name="Suzuki S."/>
            <person name="Tagami M."/>
            <person name="Waki K."/>
            <person name="Watahiki A."/>
            <person name="Okamura-Oho Y."/>
            <person name="Suzuki H."/>
            <person name="Kawai J."/>
            <person name="Hayashizaki Y."/>
        </authorList>
    </citation>
    <scope>NUCLEOTIDE SEQUENCE [LARGE SCALE MRNA]</scope>
    <source>
        <strain>C57BL/6J</strain>
        <strain>NOD</strain>
        <tissue>Brain</tissue>
        <tissue>Head</tissue>
        <tissue>Thymus</tissue>
        <tissue>Urinary bladder</tissue>
    </source>
</reference>
<reference key="3">
    <citation type="journal article" date="2004" name="Genome Res.">
        <title>The status, quality, and expansion of the NIH full-length cDNA project: the Mammalian Gene Collection (MGC).</title>
        <authorList>
            <consortium name="The MGC Project Team"/>
        </authorList>
    </citation>
    <scope>NUCLEOTIDE SEQUENCE [LARGE SCALE MRNA]</scope>
    <source>
        <tissue>Eye</tissue>
    </source>
</reference>
<reference key="4">
    <citation type="submission" date="2009-01" db="UniProtKB">
        <authorList>
            <person name="Lubec G."/>
            <person name="Klug S."/>
            <person name="Kang S.U."/>
            <person name="Sunyer B."/>
            <person name="Chen W.-Q."/>
        </authorList>
    </citation>
    <scope>PROTEIN SEQUENCE OF 54-65; 76-89; 137-162; 171-189; 193-201 AND 260-268</scope>
    <scope>IDENTIFICATION BY MASS SPECTROMETRY</scope>
    <source>
        <strain>C57BL/6J</strain>
        <strain>OF1</strain>
        <tissue>Brain</tissue>
        <tissue>Hippocampus</tissue>
    </source>
</reference>
<reference key="5">
    <citation type="journal article" date="1993" name="Gene">
        <title>Novel CDC2-related protein kinases produced in murine hematopoietic stem cells.</title>
        <authorList>
            <person name="Ershler M.A."/>
            <person name="Nagorskaya T.V."/>
            <person name="Visser J.W.M."/>
            <person name="Belyavsky A.V."/>
        </authorList>
    </citation>
    <scope>NUCLEOTIDE SEQUENCE [MRNA] OF 152-190</scope>
    <source>
        <strain>CBA/J</strain>
        <tissue>Bone marrow</tissue>
    </source>
</reference>
<reference key="6">
    <citation type="journal article" date="1991" name="EMBO J.">
        <title>Identification of the regulatory phosphorylation sites in pp42/mitogen-activated protein kinase (MAP kinase).</title>
        <authorList>
            <person name="Payne D.M."/>
            <person name="Rossomando A.J."/>
            <person name="Martino P."/>
            <person name="Erickson A.K."/>
            <person name="Her J.-H."/>
            <person name="Shabanowitz J."/>
            <person name="Hunt D.F."/>
            <person name="Weber M.J."/>
            <person name="Sturgill T.W."/>
        </authorList>
    </citation>
    <scope>PHOSPHORYLATION AT THR-183 AND TYR-185</scope>
    <scope>PARTIAL PROTEIN SEQUENCE</scope>
</reference>
<reference key="7">
    <citation type="journal article" date="1993" name="Cell">
        <title>MKP-1 (3CH134), an immediate early gene product, is a dual specificity phosphatase that dephosphorylates MAP kinase in vivo.</title>
        <authorList>
            <person name="Sun H."/>
            <person name="Charles C.H."/>
            <person name="Lau L.F."/>
            <person name="Tonks N.K."/>
        </authorList>
    </citation>
    <scope>PHOSPHORYLATION AT THR-183 AND TYR-185</scope>
    <scope>DEPHOSPHORYLATION BY DUSP1</scope>
    <scope>ACTIVITY REGULATION</scope>
</reference>
<reference key="8">
    <citation type="journal article" date="1999" name="J. Leukoc. Biol.">
        <title>Flt3 signaling involves tyrosyl-phosphorylation of SHP-2 and SHIP and their association with Grb2 and Shc in Baf3/Flt3 cells.</title>
        <authorList>
            <person name="Zhang S."/>
            <person name="Mantel C."/>
            <person name="Broxmeyer H.E."/>
        </authorList>
    </citation>
    <scope>PHOSPHORYLATION IN RESPONSE TO FLT3 SIGNALING</scope>
</reference>
<reference key="9">
    <citation type="journal article" date="2000" name="Blood">
        <title>Flt3 mutations from patients with acute myeloid leukemia induce transformation of 32D cells mediated by the Ras and STAT5 pathways.</title>
        <authorList>
            <person name="Mizuki M."/>
            <person name="Fenski R."/>
            <person name="Halfter H."/>
            <person name="Matsumura I."/>
            <person name="Schmidt R."/>
            <person name="Muller C."/>
            <person name="Gruning W."/>
            <person name="Kratz-Albers K."/>
            <person name="Serve S."/>
            <person name="Steur C."/>
            <person name="Buchner T."/>
            <person name="Kienast J."/>
            <person name="Kanakura Y."/>
            <person name="Berdel W.E."/>
            <person name="Serve H."/>
        </authorList>
    </citation>
    <scope>PHOSPHORYLATION IN RESPONSE TO FLT3 SIGNALING</scope>
</reference>
<reference key="10">
    <citation type="journal article" date="2000" name="J. Biol. Chem.">
        <title>Phosphorylation of paxillin via the ERK mitogen-activated protein kinase cascade in EL4 thymoma cells.</title>
        <authorList>
            <person name="Ku H."/>
            <person name="Meier K.E."/>
        </authorList>
    </citation>
    <scope>FUNCTION IN PHOSPHORYLATION OF PXN</scope>
</reference>
<reference key="11">
    <citation type="journal article" date="2001" name="Dev. Cell">
        <title>PEA-15 mediates cytoplasmic sequestration of ERK MAP kinase.</title>
        <authorList>
            <person name="Formstecher E."/>
            <person name="Ramos J.W."/>
            <person name="Fauquet M."/>
            <person name="Calderwood D.A."/>
            <person name="Hsieh J.C."/>
            <person name="Canton B."/>
            <person name="Nguyen X.T."/>
            <person name="Barnier J.V."/>
            <person name="Camonis J."/>
            <person name="Ginsberg M.H."/>
            <person name="Chneiweiss H."/>
        </authorList>
    </citation>
    <scope>INTERACTION WITH PEA15</scope>
    <scope>SUBCELLULAR LOCATION</scope>
    <scope>FUNCTION OF THE MAPK ERK CASCADE</scope>
</reference>
<reference key="12">
    <citation type="journal article" date="2002" name="Nat. Cell Biol.">
        <title>Molecular interpretation of ERK signal duration by immediate early gene products.</title>
        <authorList>
            <person name="Murphy L.O."/>
            <person name="Smith S."/>
            <person name="Chen R.H."/>
            <person name="Fingar D.C."/>
            <person name="Blenis J."/>
        </authorList>
    </citation>
    <scope>FUNCTION IN PHOSPHORYLATION OF FOS</scope>
    <scope>SUBCELLULAR LOCATION</scope>
</reference>
<reference key="13">
    <citation type="journal article" date="2004" name="Proc. Natl. Acad. Sci. U.S.A.">
        <title>Modular construction of a signaling scaffold: MORG1 interacts with components of the ERK cascade and links ERK signaling to specific agonists.</title>
        <authorList>
            <person name="Vomastek T."/>
            <person name="Schaeffer H.-J."/>
            <person name="Tarcsafalvi A."/>
            <person name="Smolkin M.E."/>
            <person name="Bissonette E.A."/>
            <person name="Weber M.J."/>
        </authorList>
    </citation>
    <scope>INTERACTION WITH MORG1</scope>
</reference>
<reference key="14">
    <citation type="journal article" date="2005" name="Cancer Res.">
        <title>bHLH-zip transcription factor Spz1 mediates mitogen-activated protein kinase cell proliferation, transformation, and tumorigenesis.</title>
        <authorList>
            <person name="Hsu S.-H."/>
            <person name="Hsieh-Li H.-M."/>
            <person name="Huang H.-Y."/>
            <person name="Huang P.-H."/>
            <person name="Li H."/>
        </authorList>
    </citation>
    <scope>PHOSPHORYLATION OF SPZ1</scope>
</reference>
<reference key="15">
    <citation type="journal article" date="2005" name="J. Biol. Chem.">
        <title>GIT1 is a scaffold for ERK1/2 activation in focal adhesions.</title>
        <authorList>
            <person name="Yin G."/>
            <person name="Zheng Q."/>
            <person name="Yan C."/>
            <person name="Berk B.C."/>
        </authorList>
    </citation>
    <scope>INTERACTION WITH GIT1</scope>
    <scope>SUBCELLULAR LOCATION</scope>
</reference>
<reference key="16">
    <citation type="journal article" date="2005" name="J. Biol. Chem.">
        <title>Features of the catalytic domains and C termini of the MAPK signal-integrating kinases Mnk1 and Mnk2 determine their differing activities and regulatory properties.</title>
        <authorList>
            <person name="Parra J.L."/>
            <person name="Buxade M."/>
            <person name="Proud C.G."/>
        </authorList>
    </citation>
    <scope>INTERACTION WITH MKNK2</scope>
</reference>
<reference key="17">
    <citation type="journal article" date="2007" name="J. Immunol.">
        <title>Quantitative time-resolved phosphoproteomic analysis of mast cell signaling.</title>
        <authorList>
            <person name="Cao L."/>
            <person name="Yu K."/>
            <person name="Banh C."/>
            <person name="Nguyen V."/>
            <person name="Ritz A."/>
            <person name="Raphael B.J."/>
            <person name="Kawakami Y."/>
            <person name="Kawakami T."/>
            <person name="Salomon A.R."/>
        </authorList>
    </citation>
    <scope>PHOSPHORYLATION [LARGE SCALE ANALYSIS] AT THR-183 AND TYR-185</scope>
    <scope>IDENTIFICATION BY MASS SPECTROMETRY [LARGE SCALE ANALYSIS]</scope>
    <source>
        <tissue>Mast cell</tissue>
    </source>
</reference>
<reference key="18">
    <citation type="journal article" date="2007" name="Proc. Natl. Acad. Sci. U.S.A.">
        <title>Large-scale phosphorylation analysis of mouse liver.</title>
        <authorList>
            <person name="Villen J."/>
            <person name="Beausoleil S.A."/>
            <person name="Gerber S.A."/>
            <person name="Gygi S.P."/>
        </authorList>
    </citation>
    <scope>PHOSPHORYLATION [LARGE SCALE ANALYSIS] AT THR-183 AND TYR-185</scope>
    <scope>IDENTIFICATION BY MASS SPECTROMETRY [LARGE SCALE ANALYSIS]</scope>
    <source>
        <tissue>Liver</tissue>
    </source>
</reference>
<reference key="19">
    <citation type="journal article" date="2008" name="J. Proteome Res.">
        <title>Large-scale identification and evolution indexing of tyrosine phosphorylation sites from murine brain.</title>
        <authorList>
            <person name="Ballif B.A."/>
            <person name="Carey G.R."/>
            <person name="Sunyaev S.R."/>
            <person name="Gygi S.P."/>
        </authorList>
    </citation>
    <scope>PHOSPHORYLATION [LARGE SCALE ANALYSIS] AT THR-183 AND TYR-185</scope>
    <scope>IDENTIFICATION BY MASS SPECTROMETRY [LARGE SCALE ANALYSIS]</scope>
    <source>
        <tissue>Brain</tissue>
    </source>
</reference>
<reference key="20">
    <citation type="journal article" date="2009" name="Mol. Cell. Proteomics">
        <title>Large scale localization of protein phosphorylation by use of electron capture dissociation mass spectrometry.</title>
        <authorList>
            <person name="Sweet S.M."/>
            <person name="Bailey C.M."/>
            <person name="Cunningham D.L."/>
            <person name="Heath J.K."/>
            <person name="Cooper H.J."/>
        </authorList>
    </citation>
    <scope>PHOSPHORYLATION [LARGE SCALE ANALYSIS] AT THR-183 AND TYR-185</scope>
    <scope>IDENTIFICATION BY MASS SPECTROMETRY [LARGE SCALE ANALYSIS]</scope>
    <source>
        <tissue>Embryonic fibroblast</tissue>
    </source>
</reference>
<reference key="21">
    <citation type="journal article" date="2010" name="Cell">
        <title>A tissue-specific atlas of mouse protein phosphorylation and expression.</title>
        <authorList>
            <person name="Huttlin E.L."/>
            <person name="Jedrychowski M.P."/>
            <person name="Elias J.E."/>
            <person name="Goswami T."/>
            <person name="Rad R."/>
            <person name="Beausoleil S.A."/>
            <person name="Villen J."/>
            <person name="Haas W."/>
            <person name="Sowa M.E."/>
            <person name="Gygi S.P."/>
        </authorList>
    </citation>
    <scope>PHOSPHORYLATION [LARGE SCALE ANALYSIS] AT THR-183 AND TYR-185</scope>
    <scope>IDENTIFICATION BY MASS SPECTROMETRY [LARGE SCALE ANALYSIS]</scope>
    <source>
        <tissue>Brain</tissue>
        <tissue>Brown adipose tissue</tissue>
        <tissue>Heart</tissue>
        <tissue>Kidney</tissue>
        <tissue>Liver</tissue>
        <tissue>Lung</tissue>
        <tissue>Pancreas</tissue>
        <tissue>Spleen</tissue>
        <tissue>Testis</tissue>
    </source>
</reference>
<reference key="22">
    <citation type="journal article" date="2011" name="J. Biol. Chem.">
        <title>Protein-tyrosine phosphatase DEP-1 controls receptor tyrosine kinase FLT3 signaling.</title>
        <authorList>
            <person name="Arora D."/>
            <person name="Stopp S."/>
            <person name="Bohmer S.A."/>
            <person name="Schons J."/>
            <person name="Godfrey R."/>
            <person name="Masson K."/>
            <person name="Razumovskaya E."/>
            <person name="Ronnstrand L."/>
            <person name="Tanzer S."/>
            <person name="Bauer R."/>
            <person name="Bohmer F.D."/>
            <person name="Muller J.P."/>
        </authorList>
    </citation>
    <scope>PHOSPHORYLATION IN RESPONSE TO FLT3 SIGNALING</scope>
</reference>
<reference key="23">
    <citation type="journal article" date="2006" name="Growth Factors">
        <title>The extracellular signal-regulated kinase: multiple substrates regulate diverse cellular functions.</title>
        <authorList>
            <person name="Yoon S."/>
            <person name="Seger R."/>
        </authorList>
    </citation>
    <scope>REVIEW ON FUNCTION</scope>
</reference>
<reference key="24">
    <citation type="journal article" date="2009" name="BioFactors">
        <title>The ERK signaling cascade--views from different subcellular compartments.</title>
        <authorList>
            <person name="Yao Z."/>
            <person name="Seger R."/>
        </authorList>
    </citation>
    <scope>REVIEW ON FUNCTION</scope>
    <scope>REVIEW ON SUBCELLULAR LOCATION</scope>
</reference>
<reference key="25">
    <citation type="journal article" date="2011" name="Genes Cancer">
        <title>The ERK cascade: distinct functions within various subcellular organelles.</title>
        <authorList>
            <person name="Wortzel I."/>
            <person name="Seger R."/>
        </authorList>
    </citation>
    <scope>REVIEW ON ACTIVITY REGULATION</scope>
    <scope>REVIEW ON FUNCTION</scope>
</reference>
<reference key="26">
    <citation type="journal article" date="2011" name="PLoS ONE">
        <title>ISG15 modulates development of the erythroid lineage.</title>
        <authorList>
            <person name="Maragno A.L."/>
            <person name="Pironin M."/>
            <person name="Alcalde H."/>
            <person name="Cong X."/>
            <person name="Knobeloch K.P."/>
            <person name="Tangy F."/>
            <person name="Zhang D.E."/>
            <person name="Ghysdael J."/>
            <person name="Quang C.T."/>
        </authorList>
    </citation>
    <scope>ISGYLATION</scope>
</reference>
<reference key="27">
    <citation type="journal article" date="2015" name="Proc. Natl. Acad. Sci. U.S.A.">
        <title>FXR1P is a GSK3beta substrate regulating mood and emotion processing.</title>
        <authorList>
            <person name="Del'Guidice T."/>
            <person name="Latapy C."/>
            <person name="Rampino A."/>
            <person name="Khlghatyan J."/>
            <person name="Lemasson M."/>
            <person name="Gelao B."/>
            <person name="Quarto T."/>
            <person name="Rizzo G."/>
            <person name="Barbeau A."/>
            <person name="Lamarre C."/>
            <person name="Bertolino A."/>
            <person name="Blasi G."/>
            <person name="Beaulieu J.M."/>
        </authorList>
    </citation>
    <scope>FUNCTION IN PHOSPHORYLATION OF FXR1</scope>
</reference>
<reference key="28">
    <citation type="journal article" date="2016" name="Cell Rep.">
        <title>The phosphatase Dusp7 drives meiotic resumption and chromosome alignment in mouse oocytes.</title>
        <authorList>
            <person name="Tischer T."/>
            <person name="Schuh M."/>
        </authorList>
    </citation>
    <scope>INTERACTION WITH DUSP7</scope>
</reference>
<dbReference type="EC" id="2.7.11.24" evidence="3"/>
<dbReference type="EMBL" id="X58712">
    <property type="protein sequence ID" value="CAA41548.1"/>
    <property type="molecule type" value="mRNA"/>
</dbReference>
<dbReference type="EMBL" id="AK035386">
    <property type="protein sequence ID" value="BAC29053.1"/>
    <property type="molecule type" value="mRNA"/>
</dbReference>
<dbReference type="EMBL" id="AK048127">
    <property type="protein sequence ID" value="BAC33251.1"/>
    <property type="molecule type" value="mRNA"/>
</dbReference>
<dbReference type="EMBL" id="AK087925">
    <property type="protein sequence ID" value="BAC40044.1"/>
    <property type="molecule type" value="mRNA"/>
</dbReference>
<dbReference type="EMBL" id="AK132241">
    <property type="protein sequence ID" value="BAE21053.1"/>
    <property type="molecule type" value="mRNA"/>
</dbReference>
<dbReference type="EMBL" id="BC058258">
    <property type="protein sequence ID" value="AAH58258.1"/>
    <property type="molecule type" value="mRNA"/>
</dbReference>
<dbReference type="EMBL" id="D10939">
    <property type="protein sequence ID" value="BAA01733.1"/>
    <property type="molecule type" value="mRNA"/>
</dbReference>
<dbReference type="CCDS" id="CCDS27992.1"/>
<dbReference type="PIR" id="S16444">
    <property type="entry name" value="S16444"/>
</dbReference>
<dbReference type="RefSeq" id="NP_001033752.1">
    <property type="nucleotide sequence ID" value="NM_001038663.1"/>
</dbReference>
<dbReference type="RefSeq" id="NP_001344044.1">
    <property type="nucleotide sequence ID" value="NM_001357115.1"/>
</dbReference>
<dbReference type="RefSeq" id="NP_036079.1">
    <property type="nucleotide sequence ID" value="NM_011949.3"/>
</dbReference>
<dbReference type="RefSeq" id="XP_006522210.1">
    <property type="nucleotide sequence ID" value="XM_006522147.3"/>
</dbReference>
<dbReference type="BMRB" id="P63085"/>
<dbReference type="SMR" id="P63085"/>
<dbReference type="BioGRID" id="204966">
    <property type="interactions" value="89"/>
</dbReference>
<dbReference type="CORUM" id="P63085"/>
<dbReference type="DIP" id="DIP-661N"/>
<dbReference type="ELM" id="P63085"/>
<dbReference type="FunCoup" id="P63085">
    <property type="interactions" value="4241"/>
</dbReference>
<dbReference type="IntAct" id="P63085">
    <property type="interactions" value="41"/>
</dbReference>
<dbReference type="MINT" id="P63085"/>
<dbReference type="STRING" id="10090.ENSMUSP00000065983"/>
<dbReference type="BindingDB" id="P63085"/>
<dbReference type="ChEMBL" id="CHEMBL2207"/>
<dbReference type="MoonDB" id="P63085">
    <property type="type" value="Predicted"/>
</dbReference>
<dbReference type="GlyGen" id="P63085">
    <property type="glycosylation" value="1 site"/>
</dbReference>
<dbReference type="iPTMnet" id="P63085"/>
<dbReference type="PhosphoSitePlus" id="P63085"/>
<dbReference type="SwissPalm" id="P63085"/>
<dbReference type="jPOST" id="P63085"/>
<dbReference type="PaxDb" id="10090-ENSMUSP00000065983"/>
<dbReference type="PeptideAtlas" id="P63085"/>
<dbReference type="ProteomicsDB" id="295630"/>
<dbReference type="Pumba" id="P63085"/>
<dbReference type="Antibodypedia" id="3785">
    <property type="antibodies" value="1927 antibodies from 55 providers"/>
</dbReference>
<dbReference type="DNASU" id="26413"/>
<dbReference type="Ensembl" id="ENSMUST00000069107.14">
    <property type="protein sequence ID" value="ENSMUSP00000065983.8"/>
    <property type="gene ID" value="ENSMUSG00000063358.18"/>
</dbReference>
<dbReference type="Ensembl" id="ENSMUST00000115731.10">
    <property type="protein sequence ID" value="ENSMUSP00000111396.2"/>
    <property type="gene ID" value="ENSMUSG00000063358.18"/>
</dbReference>
<dbReference type="Ensembl" id="ENSMUST00000232611.2">
    <property type="protein sequence ID" value="ENSMUSP00000156154.2"/>
    <property type="gene ID" value="ENSMUSG00000063358.18"/>
</dbReference>
<dbReference type="GeneID" id="26413"/>
<dbReference type="KEGG" id="mmu:26413"/>
<dbReference type="UCSC" id="uc007yjq.1">
    <property type="organism name" value="mouse"/>
</dbReference>
<dbReference type="AGR" id="MGI:1346858"/>
<dbReference type="CTD" id="5594"/>
<dbReference type="MGI" id="MGI:1346858">
    <property type="gene designation" value="Mapk1"/>
</dbReference>
<dbReference type="VEuPathDB" id="HostDB:ENSMUSG00000063358"/>
<dbReference type="eggNOG" id="KOG0660">
    <property type="taxonomic scope" value="Eukaryota"/>
</dbReference>
<dbReference type="GeneTree" id="ENSGT00940000156771"/>
<dbReference type="HOGENOM" id="CLU_000288_181_1_1"/>
<dbReference type="InParanoid" id="P63085"/>
<dbReference type="OMA" id="SFFDFDY"/>
<dbReference type="OrthoDB" id="192887at2759"/>
<dbReference type="PhylomeDB" id="P63085"/>
<dbReference type="TreeFam" id="TF105097"/>
<dbReference type="BRENDA" id="2.7.11.24">
    <property type="organism ID" value="3474"/>
</dbReference>
<dbReference type="Reactome" id="R-MMU-111995">
    <property type="pathway name" value="phospho-PLA2 pathway"/>
</dbReference>
<dbReference type="Reactome" id="R-MMU-112409">
    <property type="pathway name" value="RAF-independent MAPK1/3 activation"/>
</dbReference>
<dbReference type="Reactome" id="R-MMU-112411">
    <property type="pathway name" value="MAPK1 (ERK2) activation"/>
</dbReference>
<dbReference type="Reactome" id="R-MMU-1181150">
    <property type="pathway name" value="Signaling by NODAL"/>
</dbReference>
<dbReference type="Reactome" id="R-MMU-1295596">
    <property type="pathway name" value="Spry regulation of FGF signaling"/>
</dbReference>
<dbReference type="Reactome" id="R-MMU-1502540">
    <property type="pathway name" value="Signaling by Activin"/>
</dbReference>
<dbReference type="Reactome" id="R-MMU-162658">
    <property type="pathway name" value="Golgi Cisternae Pericentriolar Stack Reorganization"/>
</dbReference>
<dbReference type="Reactome" id="R-MMU-170968">
    <property type="pathway name" value="Frs2-mediated activation"/>
</dbReference>
<dbReference type="Reactome" id="R-MMU-198753">
    <property type="pathway name" value="ERK/MAPK targets"/>
</dbReference>
<dbReference type="Reactome" id="R-MMU-202670">
    <property type="pathway name" value="ERKs are inactivated"/>
</dbReference>
<dbReference type="Reactome" id="R-MMU-2029482">
    <property type="pathway name" value="Regulation of actin dynamics for phagocytic cup formation"/>
</dbReference>
<dbReference type="Reactome" id="R-MMU-2173795">
    <property type="pathway name" value="Downregulation of SMAD2/3:SMAD4 transcriptional activity"/>
</dbReference>
<dbReference type="Reactome" id="R-MMU-2173796">
    <property type="pathway name" value="SMAD2/SMAD3:SMAD4 heterotrimer regulates transcription"/>
</dbReference>
<dbReference type="Reactome" id="R-MMU-2559580">
    <property type="pathway name" value="Oxidative Stress Induced Senescence"/>
</dbReference>
<dbReference type="Reactome" id="R-MMU-2559582">
    <property type="pathway name" value="Senescence-Associated Secretory Phenotype (SASP)"/>
</dbReference>
<dbReference type="Reactome" id="R-MMU-2559585">
    <property type="pathway name" value="Oncogene Induced Senescence"/>
</dbReference>
<dbReference type="Reactome" id="R-MMU-2871796">
    <property type="pathway name" value="FCERI mediated MAPK activation"/>
</dbReference>
<dbReference type="Reactome" id="R-MMU-3371453">
    <property type="pathway name" value="Regulation of HSF1-mediated heat shock response"/>
</dbReference>
<dbReference type="Reactome" id="R-MMU-375165">
    <property type="pathway name" value="NCAM signaling for neurite out-growth"/>
</dbReference>
<dbReference type="Reactome" id="R-MMU-437239">
    <property type="pathway name" value="Recycling pathway of L1"/>
</dbReference>
<dbReference type="Reactome" id="R-MMU-445144">
    <property type="pathway name" value="Signal transduction by L1"/>
</dbReference>
<dbReference type="Reactome" id="R-MMU-450341">
    <property type="pathway name" value="Activation of the AP-1 family of transcription factors"/>
</dbReference>
<dbReference type="Reactome" id="R-MMU-456926">
    <property type="pathway name" value="Thrombin signalling through proteinase activated receptors (PARs)"/>
</dbReference>
<dbReference type="Reactome" id="R-MMU-5654726">
    <property type="pathway name" value="Negative regulation of FGFR1 signaling"/>
</dbReference>
<dbReference type="Reactome" id="R-MMU-5654727">
    <property type="pathway name" value="Negative regulation of FGFR2 signaling"/>
</dbReference>
<dbReference type="Reactome" id="R-MMU-5654732">
    <property type="pathway name" value="Negative regulation of FGFR3 signaling"/>
</dbReference>
<dbReference type="Reactome" id="R-MMU-5654733">
    <property type="pathway name" value="Negative regulation of FGFR4 signaling"/>
</dbReference>
<dbReference type="Reactome" id="R-MMU-5663213">
    <property type="pathway name" value="RHO GTPases Activate WASPs and WAVEs"/>
</dbReference>
<dbReference type="Reactome" id="R-MMU-5668599">
    <property type="pathway name" value="RHO GTPases Activate NADPH Oxidases"/>
</dbReference>
<dbReference type="Reactome" id="R-MMU-5673001">
    <property type="pathway name" value="RAF/MAP kinase cascade"/>
</dbReference>
<dbReference type="Reactome" id="R-MMU-5674135">
    <property type="pathway name" value="MAP2K and MAPK activation"/>
</dbReference>
<dbReference type="Reactome" id="R-MMU-5674499">
    <property type="pathway name" value="Negative feedback regulation of MAPK pathway"/>
</dbReference>
<dbReference type="Reactome" id="R-MMU-5675221">
    <property type="pathway name" value="Negative regulation of MAPK pathway"/>
</dbReference>
<dbReference type="Reactome" id="R-MMU-6798695">
    <property type="pathway name" value="Neutrophil degranulation"/>
</dbReference>
<dbReference type="Reactome" id="R-MMU-6811558">
    <property type="pathway name" value="PI5P, PP2A and IER3 Regulate PI3K/AKT Signaling"/>
</dbReference>
<dbReference type="Reactome" id="R-MMU-74749">
    <property type="pathway name" value="Signal attenuation"/>
</dbReference>
<dbReference type="Reactome" id="R-MMU-877300">
    <property type="pathway name" value="Interferon gamma signaling"/>
</dbReference>
<dbReference type="Reactome" id="R-MMU-881907">
    <property type="pathway name" value="Gastrin-CREB signalling pathway via PKC and MAPK"/>
</dbReference>
<dbReference type="Reactome" id="R-MMU-9627069">
    <property type="pathway name" value="Regulation of the apoptosome activity"/>
</dbReference>
<dbReference type="Reactome" id="R-MMU-9634635">
    <property type="pathway name" value="Estrogen-stimulated signaling through PRKCZ"/>
</dbReference>
<dbReference type="Reactome" id="R-MMU-9634638">
    <property type="pathway name" value="Estrogen-dependent nuclear events downstream of ESR-membrane signaling"/>
</dbReference>
<dbReference type="Reactome" id="R-MMU-9732724">
    <property type="pathway name" value="IFNG signaling activates MAPKs"/>
</dbReference>
<dbReference type="Reactome" id="R-MMU-982772">
    <property type="pathway name" value="Growth hormone receptor signaling"/>
</dbReference>
<dbReference type="Reactome" id="R-MMU-9856649">
    <property type="pathway name" value="Transcriptional and post-translational regulation of MITF-M expression and activity"/>
</dbReference>
<dbReference type="BioGRID-ORCS" id="26413">
    <property type="hits" value="10 hits in 81 CRISPR screens"/>
</dbReference>
<dbReference type="CD-CODE" id="CE726F99">
    <property type="entry name" value="Postsynaptic density"/>
</dbReference>
<dbReference type="ChiTaRS" id="Mapk1">
    <property type="organism name" value="mouse"/>
</dbReference>
<dbReference type="PRO" id="PR:P63085"/>
<dbReference type="Proteomes" id="UP000000589">
    <property type="component" value="Chromosome 16"/>
</dbReference>
<dbReference type="RNAct" id="P63085">
    <property type="molecule type" value="protein"/>
</dbReference>
<dbReference type="Bgee" id="ENSMUSG00000063358">
    <property type="expression patterns" value="Expressed in dentate gyrus of hippocampal formation granule cell and 278 other cell types or tissues"/>
</dbReference>
<dbReference type="ExpressionAtlas" id="P63085">
    <property type="expression patterns" value="baseline and differential"/>
</dbReference>
<dbReference type="GO" id="GO:0005901">
    <property type="term" value="C:caveola"/>
    <property type="evidence" value="ECO:0000250"/>
    <property type="project" value="UniProtKB"/>
</dbReference>
<dbReference type="GO" id="GO:0005813">
    <property type="term" value="C:centrosome"/>
    <property type="evidence" value="ECO:0007669"/>
    <property type="project" value="UniProtKB-SubCell"/>
</dbReference>
<dbReference type="GO" id="GO:0036064">
    <property type="term" value="C:ciliary basal body"/>
    <property type="evidence" value="ECO:0007669"/>
    <property type="project" value="Ensembl"/>
</dbReference>
<dbReference type="GO" id="GO:0005737">
    <property type="term" value="C:cytoplasm"/>
    <property type="evidence" value="ECO:0000314"/>
    <property type="project" value="AgBase"/>
</dbReference>
<dbReference type="GO" id="GO:0005856">
    <property type="term" value="C:cytoskeleton"/>
    <property type="evidence" value="ECO:0000304"/>
    <property type="project" value="UniProtKB"/>
</dbReference>
<dbReference type="GO" id="GO:0005829">
    <property type="term" value="C:cytosol"/>
    <property type="evidence" value="ECO:0000314"/>
    <property type="project" value="BHF-UCL"/>
</dbReference>
<dbReference type="GO" id="GO:0005769">
    <property type="term" value="C:early endosome"/>
    <property type="evidence" value="ECO:0000304"/>
    <property type="project" value="UniProtKB"/>
</dbReference>
<dbReference type="GO" id="GO:0005925">
    <property type="term" value="C:focal adhesion"/>
    <property type="evidence" value="ECO:0000304"/>
    <property type="project" value="UniProtKB"/>
</dbReference>
<dbReference type="GO" id="GO:0005794">
    <property type="term" value="C:Golgi apparatus"/>
    <property type="evidence" value="ECO:0000304"/>
    <property type="project" value="UniProtKB"/>
</dbReference>
<dbReference type="GO" id="GO:0005770">
    <property type="term" value="C:late endosome"/>
    <property type="evidence" value="ECO:0000304"/>
    <property type="project" value="UniProtKB"/>
</dbReference>
<dbReference type="GO" id="GO:0005739">
    <property type="term" value="C:mitochondrion"/>
    <property type="evidence" value="ECO:0000314"/>
    <property type="project" value="MGI"/>
</dbReference>
<dbReference type="GO" id="GO:0072686">
    <property type="term" value="C:mitotic spindle"/>
    <property type="evidence" value="ECO:0000250"/>
    <property type="project" value="UniProtKB"/>
</dbReference>
<dbReference type="GO" id="GO:0005654">
    <property type="term" value="C:nucleoplasm"/>
    <property type="evidence" value="ECO:0000304"/>
    <property type="project" value="Reactome"/>
</dbReference>
<dbReference type="GO" id="GO:0005634">
    <property type="term" value="C:nucleus"/>
    <property type="evidence" value="ECO:0000314"/>
    <property type="project" value="AgBase"/>
</dbReference>
<dbReference type="GO" id="GO:0005886">
    <property type="term" value="C:plasma membrane"/>
    <property type="evidence" value="ECO:0000250"/>
    <property type="project" value="UniProtKB"/>
</dbReference>
<dbReference type="GO" id="GO:0031143">
    <property type="term" value="C:pseudopodium"/>
    <property type="evidence" value="ECO:0000314"/>
    <property type="project" value="UniProtKB"/>
</dbReference>
<dbReference type="GO" id="GO:0005524">
    <property type="term" value="F:ATP binding"/>
    <property type="evidence" value="ECO:0007669"/>
    <property type="project" value="UniProtKB-KW"/>
</dbReference>
<dbReference type="GO" id="GO:0042802">
    <property type="term" value="F:identical protein binding"/>
    <property type="evidence" value="ECO:0000353"/>
    <property type="project" value="IntAct"/>
</dbReference>
<dbReference type="GO" id="GO:0016301">
    <property type="term" value="F:kinase activity"/>
    <property type="evidence" value="ECO:0000314"/>
    <property type="project" value="MGI"/>
</dbReference>
<dbReference type="GO" id="GO:0004707">
    <property type="term" value="F:MAP kinase activity"/>
    <property type="evidence" value="ECO:0000314"/>
    <property type="project" value="MGI"/>
</dbReference>
<dbReference type="GO" id="GO:0019902">
    <property type="term" value="F:phosphatase binding"/>
    <property type="evidence" value="ECO:0000353"/>
    <property type="project" value="UniProtKB"/>
</dbReference>
<dbReference type="GO" id="GO:0001784">
    <property type="term" value="F:phosphotyrosine residue binding"/>
    <property type="evidence" value="ECO:0000315"/>
    <property type="project" value="MGI"/>
</dbReference>
<dbReference type="GO" id="GO:0004672">
    <property type="term" value="F:protein kinase activity"/>
    <property type="evidence" value="ECO:0000314"/>
    <property type="project" value="MGI"/>
</dbReference>
<dbReference type="GO" id="GO:0106310">
    <property type="term" value="F:protein serine kinase activity"/>
    <property type="evidence" value="ECO:0007669"/>
    <property type="project" value="RHEA"/>
</dbReference>
<dbReference type="GO" id="GO:0004674">
    <property type="term" value="F:protein serine/threonine kinase activity"/>
    <property type="evidence" value="ECO:0000314"/>
    <property type="project" value="UniProtKB"/>
</dbReference>
<dbReference type="GO" id="GO:0008353">
    <property type="term" value="F:RNA polymerase II CTD heptapeptide repeat kinase activity"/>
    <property type="evidence" value="ECO:0000314"/>
    <property type="project" value="UniProtKB"/>
</dbReference>
<dbReference type="GO" id="GO:0030521">
    <property type="term" value="P:androgen receptor signaling pathway"/>
    <property type="evidence" value="ECO:0007669"/>
    <property type="project" value="Ensembl"/>
</dbReference>
<dbReference type="GO" id="GO:0009887">
    <property type="term" value="P:animal organ morphogenesis"/>
    <property type="evidence" value="ECO:0000314"/>
    <property type="project" value="MGI"/>
</dbReference>
<dbReference type="GO" id="GO:0006915">
    <property type="term" value="P:apoptotic process"/>
    <property type="evidence" value="ECO:0007669"/>
    <property type="project" value="UniProtKB-KW"/>
</dbReference>
<dbReference type="GO" id="GO:0050853">
    <property type="term" value="P:B cell receptor signaling pathway"/>
    <property type="evidence" value="ECO:0000314"/>
    <property type="project" value="MGI"/>
</dbReference>
<dbReference type="GO" id="GO:0060020">
    <property type="term" value="P:Bergmann glial cell differentiation"/>
    <property type="evidence" value="ECO:0000316"/>
    <property type="project" value="MGI"/>
</dbReference>
<dbReference type="GO" id="GO:0061308">
    <property type="term" value="P:cardiac neural crest cell development involved in heart development"/>
    <property type="evidence" value="ECO:0000316"/>
    <property type="project" value="MGI"/>
</dbReference>
<dbReference type="GO" id="GO:0072584">
    <property type="term" value="P:caveolin-mediated endocytosis"/>
    <property type="evidence" value="ECO:0000304"/>
    <property type="project" value="UniProtKB"/>
</dbReference>
<dbReference type="GO" id="GO:0034198">
    <property type="term" value="P:cellular response to amino acid starvation"/>
    <property type="evidence" value="ECO:0007669"/>
    <property type="project" value="Ensembl"/>
</dbReference>
<dbReference type="GO" id="GO:0071356">
    <property type="term" value="P:cellular response to tumor necrosis factor"/>
    <property type="evidence" value="ECO:0000316"/>
    <property type="project" value="MGI"/>
</dbReference>
<dbReference type="GO" id="GO:0019858">
    <property type="term" value="P:cytosine metabolic process"/>
    <property type="evidence" value="ECO:0000314"/>
    <property type="project" value="MGI"/>
</dbReference>
<dbReference type="GO" id="GO:0006974">
    <property type="term" value="P:DNA damage response"/>
    <property type="evidence" value="ECO:0000314"/>
    <property type="project" value="MGI"/>
</dbReference>
<dbReference type="GO" id="GO:0006351">
    <property type="term" value="P:DNA-templated transcription"/>
    <property type="evidence" value="ECO:0000303"/>
    <property type="project" value="UniProtKB"/>
</dbReference>
<dbReference type="GO" id="GO:0007173">
    <property type="term" value="P:epidermal growth factor receptor signaling pathway"/>
    <property type="evidence" value="ECO:0007669"/>
    <property type="project" value="Ensembl"/>
</dbReference>
<dbReference type="GO" id="GO:0038133">
    <property type="term" value="P:ERBB2-ERBB3 signaling pathway"/>
    <property type="evidence" value="ECO:0000314"/>
    <property type="project" value="MGI"/>
</dbReference>
<dbReference type="GO" id="GO:0070371">
    <property type="term" value="P:ERK1 and ERK2 cascade"/>
    <property type="evidence" value="ECO:0000316"/>
    <property type="project" value="MGI"/>
</dbReference>
<dbReference type="GO" id="GO:0060324">
    <property type="term" value="P:face development"/>
    <property type="evidence" value="ECO:0000315"/>
    <property type="project" value="MGI"/>
</dbReference>
<dbReference type="GO" id="GO:0007507">
    <property type="term" value="P:heart development"/>
    <property type="evidence" value="ECO:0000315"/>
    <property type="project" value="MGI"/>
</dbReference>
<dbReference type="GO" id="GO:0008286">
    <property type="term" value="P:insulin receptor signaling pathway"/>
    <property type="evidence" value="ECO:0000314"/>
    <property type="project" value="MGI"/>
</dbReference>
<dbReference type="GO" id="GO:0048009">
    <property type="term" value="P:insulin-like growth factor receptor signaling pathway"/>
    <property type="evidence" value="ECO:0000314"/>
    <property type="project" value="MGI"/>
</dbReference>
<dbReference type="GO" id="GO:0061514">
    <property type="term" value="P:interleukin-34-mediated signaling pathway"/>
    <property type="evidence" value="ECO:0007669"/>
    <property type="project" value="Ensembl"/>
</dbReference>
<dbReference type="GO" id="GO:0060716">
    <property type="term" value="P:labyrinthine layer blood vessel development"/>
    <property type="evidence" value="ECO:0000315"/>
    <property type="project" value="MGI"/>
</dbReference>
<dbReference type="GO" id="GO:0031663">
    <property type="term" value="P:lipopolysaccharide-mediated signaling pathway"/>
    <property type="evidence" value="ECO:0000314"/>
    <property type="project" value="MGI"/>
</dbReference>
<dbReference type="GO" id="GO:0060291">
    <property type="term" value="P:long-term synaptic potentiation"/>
    <property type="evidence" value="ECO:0000316"/>
    <property type="project" value="MGI"/>
</dbReference>
<dbReference type="GO" id="GO:0060425">
    <property type="term" value="P:lung morphogenesis"/>
    <property type="evidence" value="ECO:0000316"/>
    <property type="project" value="MGI"/>
</dbReference>
<dbReference type="GO" id="GO:0033598">
    <property type="term" value="P:mammary gland epithelial cell proliferation"/>
    <property type="evidence" value="ECO:0000314"/>
    <property type="project" value="MGI"/>
</dbReference>
<dbReference type="GO" id="GO:0000165">
    <property type="term" value="P:MAPK cascade"/>
    <property type="evidence" value="ECO:0000314"/>
    <property type="project" value="MGI"/>
</dbReference>
<dbReference type="GO" id="GO:0042552">
    <property type="term" value="P:myelination"/>
    <property type="evidence" value="ECO:0000315"/>
    <property type="project" value="MGI"/>
</dbReference>
<dbReference type="GO" id="GO:0045596">
    <property type="term" value="P:negative regulation of cell differentiation"/>
    <property type="evidence" value="ECO:0000316"/>
    <property type="project" value="MGI"/>
</dbReference>
<dbReference type="GO" id="GO:0014032">
    <property type="term" value="P:neural crest cell development"/>
    <property type="evidence" value="ECO:0000316"/>
    <property type="project" value="MGI"/>
</dbReference>
<dbReference type="GO" id="GO:0042473">
    <property type="term" value="P:outer ear morphogenesis"/>
    <property type="evidence" value="ECO:0000316"/>
    <property type="project" value="MGI"/>
</dbReference>
<dbReference type="GO" id="GO:0018105">
    <property type="term" value="P:peptidyl-serine phosphorylation"/>
    <property type="evidence" value="ECO:0000314"/>
    <property type="project" value="UniProtKB"/>
</dbReference>
<dbReference type="GO" id="GO:0018107">
    <property type="term" value="P:peptidyl-threonine phosphorylation"/>
    <property type="evidence" value="ECO:0000314"/>
    <property type="project" value="UniProtKB"/>
</dbReference>
<dbReference type="GO" id="GO:0045542">
    <property type="term" value="P:positive regulation of cholesterol biosynthetic process"/>
    <property type="evidence" value="ECO:0007669"/>
    <property type="project" value="Ensembl"/>
</dbReference>
<dbReference type="GO" id="GO:0010759">
    <property type="term" value="P:positive regulation of macrophage chemotaxis"/>
    <property type="evidence" value="ECO:0007669"/>
    <property type="project" value="Ensembl"/>
</dbReference>
<dbReference type="GO" id="GO:0120041">
    <property type="term" value="P:positive regulation of macrophage proliferation"/>
    <property type="evidence" value="ECO:0007669"/>
    <property type="project" value="Ensembl"/>
</dbReference>
<dbReference type="GO" id="GO:0032206">
    <property type="term" value="P:positive regulation of telomere maintenance"/>
    <property type="evidence" value="ECO:0007669"/>
    <property type="project" value="Ensembl"/>
</dbReference>
<dbReference type="GO" id="GO:0050847">
    <property type="term" value="P:progesterone receptor signaling pathway"/>
    <property type="evidence" value="ECO:0007669"/>
    <property type="project" value="Ensembl"/>
</dbReference>
<dbReference type="GO" id="GO:0030641">
    <property type="term" value="P:regulation of cellular pH"/>
    <property type="evidence" value="ECO:0000315"/>
    <property type="project" value="MGI"/>
</dbReference>
<dbReference type="GO" id="GO:0051493">
    <property type="term" value="P:regulation of cytoskeleton organization"/>
    <property type="evidence" value="ECO:0000304"/>
    <property type="project" value="UniProtKB"/>
</dbReference>
<dbReference type="GO" id="GO:0051090">
    <property type="term" value="P:regulation of DNA-binding transcription factor activity"/>
    <property type="evidence" value="ECO:0000303"/>
    <property type="project" value="UniProtKB"/>
</dbReference>
<dbReference type="GO" id="GO:2000641">
    <property type="term" value="P:regulation of early endosome to late endosome transport"/>
    <property type="evidence" value="ECO:0000304"/>
    <property type="project" value="UniProtKB"/>
</dbReference>
<dbReference type="GO" id="GO:0090170">
    <property type="term" value="P:regulation of Golgi inheritance"/>
    <property type="evidence" value="ECO:0000304"/>
    <property type="project" value="UniProtKB"/>
</dbReference>
<dbReference type="GO" id="GO:0030278">
    <property type="term" value="P:regulation of ossification"/>
    <property type="evidence" value="ECO:0000316"/>
    <property type="project" value="MGI"/>
</dbReference>
<dbReference type="GO" id="GO:0031647">
    <property type="term" value="P:regulation of protein stability"/>
    <property type="evidence" value="ECO:0000250"/>
    <property type="project" value="UniProtKB"/>
</dbReference>
<dbReference type="GO" id="GO:0032872">
    <property type="term" value="P:regulation of stress-activated MAPK cascade"/>
    <property type="evidence" value="ECO:0000304"/>
    <property type="project" value="UniProtKB"/>
</dbReference>
<dbReference type="GO" id="GO:0070849">
    <property type="term" value="P:response to epidermal growth factor"/>
    <property type="evidence" value="ECO:0000250"/>
    <property type="project" value="UniProtKB"/>
</dbReference>
<dbReference type="GO" id="GO:0043330">
    <property type="term" value="P:response to exogenous dsRNA"/>
    <property type="evidence" value="ECO:0000314"/>
    <property type="project" value="MGI"/>
</dbReference>
<dbReference type="GO" id="GO:0032496">
    <property type="term" value="P:response to lipopolysaccharide"/>
    <property type="evidence" value="ECO:0000314"/>
    <property type="project" value="MGI"/>
</dbReference>
<dbReference type="GO" id="GO:0035094">
    <property type="term" value="P:response to nicotine"/>
    <property type="evidence" value="ECO:0000316"/>
    <property type="project" value="ARUK-UCL"/>
</dbReference>
<dbReference type="GO" id="GO:0014044">
    <property type="term" value="P:Schwann cell development"/>
    <property type="evidence" value="ECO:0000315"/>
    <property type="project" value="MGI"/>
</dbReference>
<dbReference type="GO" id="GO:0051403">
    <property type="term" value="P:stress-activated MAPK cascade"/>
    <property type="evidence" value="ECO:0007669"/>
    <property type="project" value="Ensembl"/>
</dbReference>
<dbReference type="GO" id="GO:0050852">
    <property type="term" value="P:T cell receptor signaling pathway"/>
    <property type="evidence" value="ECO:0000314"/>
    <property type="project" value="MGI"/>
</dbReference>
<dbReference type="GO" id="GO:0048538">
    <property type="term" value="P:thymus development"/>
    <property type="evidence" value="ECO:0000316"/>
    <property type="project" value="MGI"/>
</dbReference>
<dbReference type="GO" id="GO:0030878">
    <property type="term" value="P:thyroid gland development"/>
    <property type="evidence" value="ECO:0000316"/>
    <property type="project" value="MGI"/>
</dbReference>
<dbReference type="GO" id="GO:0060440">
    <property type="term" value="P:trachea formation"/>
    <property type="evidence" value="ECO:0000316"/>
    <property type="project" value="MGI"/>
</dbReference>
<dbReference type="CDD" id="cd07849">
    <property type="entry name" value="STKc_ERK1_2_like"/>
    <property type="match status" value="1"/>
</dbReference>
<dbReference type="FunFam" id="1.10.510.10:FF:000624">
    <property type="entry name" value="Mitogen-activated protein kinase"/>
    <property type="match status" value="1"/>
</dbReference>
<dbReference type="FunFam" id="3.30.200.20:FF:000373">
    <property type="entry name" value="Mitogen-activated protein kinase 1"/>
    <property type="match status" value="1"/>
</dbReference>
<dbReference type="Gene3D" id="3.30.200.20">
    <property type="entry name" value="Phosphorylase Kinase, domain 1"/>
    <property type="match status" value="1"/>
</dbReference>
<dbReference type="Gene3D" id="1.10.510.10">
    <property type="entry name" value="Transferase(Phosphotransferase) domain 1"/>
    <property type="match status" value="1"/>
</dbReference>
<dbReference type="InterPro" id="IPR011009">
    <property type="entry name" value="Kinase-like_dom_sf"/>
</dbReference>
<dbReference type="InterPro" id="IPR050117">
    <property type="entry name" value="MAP_kinase"/>
</dbReference>
<dbReference type="InterPro" id="IPR003527">
    <property type="entry name" value="MAP_kinase_CS"/>
</dbReference>
<dbReference type="InterPro" id="IPR008349">
    <property type="entry name" value="MAPK_ERK1/2"/>
</dbReference>
<dbReference type="InterPro" id="IPR000719">
    <property type="entry name" value="Prot_kinase_dom"/>
</dbReference>
<dbReference type="InterPro" id="IPR017441">
    <property type="entry name" value="Protein_kinase_ATP_BS"/>
</dbReference>
<dbReference type="InterPro" id="IPR008271">
    <property type="entry name" value="Ser/Thr_kinase_AS"/>
</dbReference>
<dbReference type="PANTHER" id="PTHR24055">
    <property type="entry name" value="MITOGEN-ACTIVATED PROTEIN KINASE"/>
    <property type="match status" value="1"/>
</dbReference>
<dbReference type="Pfam" id="PF00069">
    <property type="entry name" value="Pkinase"/>
    <property type="match status" value="1"/>
</dbReference>
<dbReference type="PRINTS" id="PR01770">
    <property type="entry name" value="ERK1ERK2MAPK"/>
</dbReference>
<dbReference type="SMART" id="SM00220">
    <property type="entry name" value="S_TKc"/>
    <property type="match status" value="1"/>
</dbReference>
<dbReference type="SUPFAM" id="SSF56112">
    <property type="entry name" value="Protein kinase-like (PK-like)"/>
    <property type="match status" value="1"/>
</dbReference>
<dbReference type="PROSITE" id="PS01351">
    <property type="entry name" value="MAPK"/>
    <property type="match status" value="1"/>
</dbReference>
<dbReference type="PROSITE" id="PS00107">
    <property type="entry name" value="PROTEIN_KINASE_ATP"/>
    <property type="match status" value="1"/>
</dbReference>
<dbReference type="PROSITE" id="PS50011">
    <property type="entry name" value="PROTEIN_KINASE_DOM"/>
    <property type="match status" value="1"/>
</dbReference>
<dbReference type="PROSITE" id="PS00108">
    <property type="entry name" value="PROTEIN_KINASE_ST"/>
    <property type="match status" value="1"/>
</dbReference>
<feature type="initiator methionine" description="Removed" evidence="3">
    <location>
        <position position="1"/>
    </location>
</feature>
<feature type="chain" id="PRO_0000186248" description="Mitogen-activated protein kinase 1">
    <location>
        <begin position="2"/>
        <end position="358"/>
    </location>
</feature>
<feature type="domain" description="Protein kinase" evidence="5">
    <location>
        <begin position="23"/>
        <end position="311"/>
    </location>
</feature>
<feature type="short sequence motif" description="TXY">
    <location>
        <begin position="183"/>
        <end position="185"/>
    </location>
</feature>
<feature type="active site" description="Proton acceptor" evidence="5 6">
    <location>
        <position position="147"/>
    </location>
</feature>
<feature type="binding site" evidence="5">
    <location>
        <begin position="29"/>
        <end position="37"/>
    </location>
    <ligand>
        <name>ATP</name>
        <dbReference type="ChEBI" id="CHEBI:30616"/>
    </ligand>
</feature>
<feature type="binding site" evidence="5">
    <location>
        <position position="52"/>
    </location>
    <ligand>
        <name>ATP</name>
        <dbReference type="ChEBI" id="CHEBI:30616"/>
    </ligand>
</feature>
<feature type="modified residue" description="N-acetylalanine" evidence="3">
    <location>
        <position position="2"/>
    </location>
</feature>
<feature type="modified residue" description="Phosphoserine; by SGK1" evidence="3">
    <location>
        <position position="27"/>
    </location>
</feature>
<feature type="modified residue" description="Phosphothreonine; by MAP2K1 and MAP2K2" evidence="13 23 24 25 26 27">
    <location>
        <position position="183"/>
    </location>
</feature>
<feature type="modified residue" description="Phosphotyrosine; by MAP2K1 and MAP2K2" evidence="13 23 24 25 26 27">
    <location>
        <position position="185"/>
    </location>
</feature>
<feature type="modified residue" description="Phosphothreonine; by autocatalysis" evidence="3">
    <location>
        <position position="188"/>
    </location>
</feature>
<feature type="modified residue" description="Phosphoserine" evidence="3">
    <location>
        <position position="244"/>
    </location>
</feature>
<feature type="modified residue" description="Phosphoserine" evidence="3">
    <location>
        <position position="246"/>
    </location>
</feature>
<feature type="modified residue" description="Phosphoserine" evidence="3">
    <location>
        <position position="282"/>
    </location>
</feature>
<proteinExistence type="evidence at protein level"/>
<name>MK01_MOUSE</name>
<evidence type="ECO:0000250" key="1"/>
<evidence type="ECO:0000250" key="2">
    <source>
        <dbReference type="UniProtKB" id="P27361"/>
    </source>
</evidence>
<evidence type="ECO:0000250" key="3">
    <source>
        <dbReference type="UniProtKB" id="P28482"/>
    </source>
</evidence>
<evidence type="ECO:0000250" key="4">
    <source>
        <dbReference type="UniProtKB" id="P63086"/>
    </source>
</evidence>
<evidence type="ECO:0000255" key="5">
    <source>
        <dbReference type="PROSITE-ProRule" id="PRU00159"/>
    </source>
</evidence>
<evidence type="ECO:0000255" key="6">
    <source>
        <dbReference type="PROSITE-ProRule" id="PRU10027"/>
    </source>
</evidence>
<evidence type="ECO:0000269" key="7">
    <source>
    </source>
</evidence>
<evidence type="ECO:0000269" key="8">
    <source>
    </source>
</evidence>
<evidence type="ECO:0000269" key="9">
    <source>
    </source>
</evidence>
<evidence type="ECO:0000269" key="10">
    <source>
    </source>
</evidence>
<evidence type="ECO:0000269" key="11">
    <source>
    </source>
</evidence>
<evidence type="ECO:0000269" key="12">
    <source>
    </source>
</evidence>
<evidence type="ECO:0000269" key="13">
    <source>
    </source>
</evidence>
<evidence type="ECO:0000269" key="14">
    <source>
    </source>
</evidence>
<evidence type="ECO:0000269" key="15">
    <source>
    </source>
</evidence>
<evidence type="ECO:0000269" key="16">
    <source>
    </source>
</evidence>
<evidence type="ECO:0000269" key="17">
    <source>
    </source>
</evidence>
<evidence type="ECO:0000303" key="18">
    <source>
    </source>
</evidence>
<evidence type="ECO:0000303" key="19">
    <source>
    </source>
</evidence>
<evidence type="ECO:0000303" key="20">
    <source>
    </source>
</evidence>
<evidence type="ECO:0000305" key="21"/>
<evidence type="ECO:0000312" key="22">
    <source>
        <dbReference type="MGI" id="MGI:1346858"/>
    </source>
</evidence>
<evidence type="ECO:0007744" key="23">
    <source>
    </source>
</evidence>
<evidence type="ECO:0007744" key="24">
    <source>
    </source>
</evidence>
<evidence type="ECO:0007744" key="25">
    <source>
    </source>
</evidence>
<evidence type="ECO:0007744" key="26">
    <source>
    </source>
</evidence>
<evidence type="ECO:0007744" key="27">
    <source>
    </source>
</evidence>
<sequence length="358" mass="41276">MAAAAAAGPEMVRGQVFDVGPRYTNLSYIGEGAYGMVCSAYDNLNKVRVAIKKISPFEHQTYCQRTLREIKILLRFRHENIIGINDIIRAPTIEQMKDVYIVQDLMETDLYKLLKTQHLSNDHICYFLYQILRGLKYIHSANVLHRDLKPSNLLLNTTCDLKICDFGLARVADPDHDHTGFLTEYVATRWYRAPEIMLNSKGYTKSIDIWSVGCILAEMLSNRPIFPGKHYLDQLNHILGILGSPSQEDLNCIINLKARNYLLSLPHKNKVPWNRLFPNADSKALDLLDKMLTFNPHKRIEVEQALAHPYLEQYYDPSDEPIAEAPFKFDMELDDLPKEKLKELIFEETARFQPGYRS</sequence>